<feature type="chain" id="PRO_0000150874" description="Olfactory receptor 1f45">
    <location>
        <begin position="1"/>
        <end position="313"/>
    </location>
</feature>
<feature type="topological domain" description="Extracellular" evidence="1">
    <location>
        <begin position="1"/>
        <end position="25"/>
    </location>
</feature>
<feature type="transmembrane region" description="Helical; Name=1" evidence="1">
    <location>
        <begin position="26"/>
        <end position="50"/>
    </location>
</feature>
<feature type="topological domain" description="Cytoplasmic" evidence="1">
    <location>
        <begin position="51"/>
        <end position="57"/>
    </location>
</feature>
<feature type="transmembrane region" description="Helical; Name=2" evidence="1">
    <location>
        <begin position="58"/>
        <end position="79"/>
    </location>
</feature>
<feature type="topological domain" description="Extracellular" evidence="1">
    <location>
        <begin position="80"/>
        <end position="100"/>
    </location>
</feature>
<feature type="transmembrane region" description="Helical; Name=3" evidence="1">
    <location>
        <begin position="101"/>
        <end position="120"/>
    </location>
</feature>
<feature type="topological domain" description="Cytoplasmic" evidence="1">
    <location>
        <begin position="121"/>
        <end position="139"/>
    </location>
</feature>
<feature type="transmembrane region" description="Helical; Name=4" evidence="1">
    <location>
        <begin position="140"/>
        <end position="158"/>
    </location>
</feature>
<feature type="topological domain" description="Extracellular" evidence="1">
    <location>
        <begin position="159"/>
        <end position="196"/>
    </location>
</feature>
<feature type="transmembrane region" description="Helical; Name=5" evidence="1">
    <location>
        <begin position="197"/>
        <end position="219"/>
    </location>
</feature>
<feature type="topological domain" description="Cytoplasmic" evidence="1">
    <location>
        <begin position="220"/>
        <end position="236"/>
    </location>
</feature>
<feature type="transmembrane region" description="Helical; Name=6" evidence="1">
    <location>
        <begin position="237"/>
        <end position="260"/>
    </location>
</feature>
<feature type="topological domain" description="Extracellular" evidence="1">
    <location>
        <begin position="261"/>
        <end position="272"/>
    </location>
</feature>
<feature type="transmembrane region" description="Helical; Name=7" evidence="1">
    <location>
        <begin position="273"/>
        <end position="292"/>
    </location>
</feature>
<feature type="topological domain" description="Cytoplasmic" evidence="1">
    <location>
        <begin position="293"/>
        <end position="313"/>
    </location>
</feature>
<feature type="glycosylation site" description="N-linked (GlcNAc...) asparagine" evidence="1">
    <location>
        <position position="5"/>
    </location>
</feature>
<feature type="disulfide bond" evidence="2">
    <location>
        <begin position="97"/>
        <end position="189"/>
    </location>
</feature>
<keyword id="KW-1003">Cell membrane</keyword>
<keyword id="KW-1015">Disulfide bond</keyword>
<keyword id="KW-0297">G-protein coupled receptor</keyword>
<keyword id="KW-0325">Glycoprotein</keyword>
<keyword id="KW-0472">Membrane</keyword>
<keyword id="KW-0552">Olfaction</keyword>
<keyword id="KW-0675">Receptor</keyword>
<keyword id="KW-1185">Reference proteome</keyword>
<keyword id="KW-0716">Sensory transduction</keyword>
<keyword id="KW-0807">Transducer</keyword>
<keyword id="KW-0812">Transmembrane</keyword>
<keyword id="KW-1133">Transmembrane helix</keyword>
<protein>
    <recommendedName>
        <fullName>Olfactory receptor 1f45</fullName>
    </recommendedName>
    <alternativeName>
        <fullName>Olfactory receptor 1361</fullName>
    </alternativeName>
    <alternativeName>
        <fullName>Olfactory receptor-like protein F5</fullName>
    </alternativeName>
</protein>
<gene>
    <name type="primary">Or1f45</name>
</gene>
<evidence type="ECO:0000255" key="1"/>
<evidence type="ECO:0000255" key="2">
    <source>
        <dbReference type="PROSITE-ProRule" id="PRU00521"/>
    </source>
</evidence>
<evidence type="ECO:0000305" key="3"/>
<accession>P23266</accession>
<name>O1361_RAT</name>
<comment type="function">
    <text evidence="3">Odorant receptor.</text>
</comment>
<comment type="subcellular location">
    <subcellularLocation>
        <location>Cell membrane</location>
        <topology>Multi-pass membrane protein</topology>
    </subcellularLocation>
</comment>
<comment type="tissue specificity">
    <text>Olfactory epithelium.</text>
</comment>
<comment type="similarity">
    <text evidence="2">Belongs to the G-protein coupled receptor 1 family.</text>
</comment>
<organism>
    <name type="scientific">Rattus norvegicus</name>
    <name type="common">Rat</name>
    <dbReference type="NCBI Taxonomy" id="10116"/>
    <lineage>
        <taxon>Eukaryota</taxon>
        <taxon>Metazoa</taxon>
        <taxon>Chordata</taxon>
        <taxon>Craniata</taxon>
        <taxon>Vertebrata</taxon>
        <taxon>Euteleostomi</taxon>
        <taxon>Mammalia</taxon>
        <taxon>Eutheria</taxon>
        <taxon>Euarchontoglires</taxon>
        <taxon>Glires</taxon>
        <taxon>Rodentia</taxon>
        <taxon>Myomorpha</taxon>
        <taxon>Muroidea</taxon>
        <taxon>Muridae</taxon>
        <taxon>Murinae</taxon>
        <taxon>Rattus</taxon>
    </lineage>
</organism>
<dbReference type="EMBL" id="M64377">
    <property type="protein sequence ID" value="AAA41740.1"/>
    <property type="molecule type" value="mRNA"/>
</dbReference>
<dbReference type="PIR" id="B23701">
    <property type="entry name" value="B23701"/>
</dbReference>
<dbReference type="RefSeq" id="NP_775455.1">
    <property type="nucleotide sequence ID" value="NM_173333.2"/>
</dbReference>
<dbReference type="SMR" id="P23266"/>
<dbReference type="FunCoup" id="P23266">
    <property type="interactions" value="1004"/>
</dbReference>
<dbReference type="STRING" id="10116.ENSRNOP00000064717"/>
<dbReference type="GlyCosmos" id="P23266">
    <property type="glycosylation" value="1 site, No reported glycans"/>
</dbReference>
<dbReference type="GlyGen" id="P23266">
    <property type="glycosylation" value="1 site"/>
</dbReference>
<dbReference type="PaxDb" id="10116-ENSRNOP00000064717"/>
<dbReference type="Ensembl" id="ENSRNOT00000071686.2">
    <property type="protein sequence ID" value="ENSRNOP00000064717.1"/>
    <property type="gene ID" value="ENSRNOG00000067846.1"/>
</dbReference>
<dbReference type="GeneID" id="287000"/>
<dbReference type="KEGG" id="rno:287000"/>
<dbReference type="UCSC" id="RGD:708422">
    <property type="organism name" value="rat"/>
</dbReference>
<dbReference type="AGR" id="RGD:41356480"/>
<dbReference type="AGR" id="RGD:708422"/>
<dbReference type="CTD" id="287000"/>
<dbReference type="RGD" id="708422">
    <property type="gene designation" value="Or1f45"/>
</dbReference>
<dbReference type="eggNOG" id="ENOG502SHUD">
    <property type="taxonomic scope" value="Eukaryota"/>
</dbReference>
<dbReference type="GeneTree" id="ENSGT00940000153683"/>
<dbReference type="HOGENOM" id="CLU_012526_1_3_1"/>
<dbReference type="InParanoid" id="P23266"/>
<dbReference type="OrthoDB" id="62335at9989"/>
<dbReference type="PhylomeDB" id="P23266"/>
<dbReference type="TreeFam" id="TF337210"/>
<dbReference type="PRO" id="PR:P23266"/>
<dbReference type="Proteomes" id="UP000002494">
    <property type="component" value="Chromosome 10"/>
</dbReference>
<dbReference type="GO" id="GO:0005886">
    <property type="term" value="C:plasma membrane"/>
    <property type="evidence" value="ECO:0000318"/>
    <property type="project" value="GO_Central"/>
</dbReference>
<dbReference type="GO" id="GO:0004930">
    <property type="term" value="F:G protein-coupled receptor activity"/>
    <property type="evidence" value="ECO:0007669"/>
    <property type="project" value="UniProtKB-KW"/>
</dbReference>
<dbReference type="GO" id="GO:0004984">
    <property type="term" value="F:olfactory receptor activity"/>
    <property type="evidence" value="ECO:0000318"/>
    <property type="project" value="GO_Central"/>
</dbReference>
<dbReference type="GO" id="GO:0007165">
    <property type="term" value="P:signal transduction"/>
    <property type="evidence" value="ECO:0000318"/>
    <property type="project" value="GO_Central"/>
</dbReference>
<dbReference type="CDD" id="cd15918">
    <property type="entry name" value="7tmA_OR1_7-like"/>
    <property type="match status" value="1"/>
</dbReference>
<dbReference type="FunFam" id="1.10.1220.70:FF:000001">
    <property type="entry name" value="Olfactory receptor"/>
    <property type="match status" value="1"/>
</dbReference>
<dbReference type="FunFam" id="1.20.1070.10:FF:000082">
    <property type="entry name" value="Olfactory receptor 1A1"/>
    <property type="match status" value="1"/>
</dbReference>
<dbReference type="Gene3D" id="1.20.1070.10">
    <property type="entry name" value="Rhodopsin 7-helix transmembrane proteins"/>
    <property type="match status" value="1"/>
</dbReference>
<dbReference type="InterPro" id="IPR000276">
    <property type="entry name" value="GPCR_Rhodpsn"/>
</dbReference>
<dbReference type="InterPro" id="IPR017452">
    <property type="entry name" value="GPCR_Rhodpsn_7TM"/>
</dbReference>
<dbReference type="InterPro" id="IPR000725">
    <property type="entry name" value="Olfact_rcpt"/>
</dbReference>
<dbReference type="PANTHER" id="PTHR48001">
    <property type="entry name" value="OLFACTORY RECEPTOR"/>
    <property type="match status" value="1"/>
</dbReference>
<dbReference type="Pfam" id="PF13853">
    <property type="entry name" value="7tm_4"/>
    <property type="match status" value="1"/>
</dbReference>
<dbReference type="PRINTS" id="PR00237">
    <property type="entry name" value="GPCRRHODOPSN"/>
</dbReference>
<dbReference type="PRINTS" id="PR00245">
    <property type="entry name" value="OLFACTORYR"/>
</dbReference>
<dbReference type="SUPFAM" id="SSF81321">
    <property type="entry name" value="Family A G protein-coupled receptor-like"/>
    <property type="match status" value="1"/>
</dbReference>
<dbReference type="PROSITE" id="PS00237">
    <property type="entry name" value="G_PROTEIN_RECEP_F1_1"/>
    <property type="match status" value="1"/>
</dbReference>
<dbReference type="PROSITE" id="PS50262">
    <property type="entry name" value="G_PROTEIN_RECEP_F1_2"/>
    <property type="match status" value="1"/>
</dbReference>
<sequence>MSSTNQSSVTEFLLLGLSRQPQQQQLLFLLFLIMYLATVLGNLLIILAIGTDSRLHTPMYFFLSNLSFVDVCFSSTTVPKVLANHILGSQAISFSGCLTQLYFLAVFGNMDNFLLAVMSYDRFVAICHPLHYTTKMTRQLCVLLVVGSWVVANMNCLLHILLMARLSFCADNMIPHFFCDGTPLLKLSCSDTHLNELMILTEGAVVMVTPFVCILISYIHITCAVLRVSSPRGGWKSFSTCGSHLAVVCLFYGTVIAVYFNPSSSHLAGRDMAAAVMYAVVTPMLNPFIYSLRNSDMKAALRKVLAMRFPSKQ</sequence>
<reference key="1">
    <citation type="journal article" date="1991" name="Cell">
        <title>A novel multigene family may encode odorant receptors: a molecular basis for odor recognition.</title>
        <authorList>
            <person name="Buck L."/>
            <person name="Axel R."/>
        </authorList>
    </citation>
    <scope>NUCLEOTIDE SEQUENCE [MRNA]</scope>
</reference>
<proteinExistence type="evidence at transcript level"/>